<organism>
    <name type="scientific">Mus musculus</name>
    <name type="common">Mouse</name>
    <dbReference type="NCBI Taxonomy" id="10090"/>
    <lineage>
        <taxon>Eukaryota</taxon>
        <taxon>Metazoa</taxon>
        <taxon>Chordata</taxon>
        <taxon>Craniata</taxon>
        <taxon>Vertebrata</taxon>
        <taxon>Euteleostomi</taxon>
        <taxon>Mammalia</taxon>
        <taxon>Eutheria</taxon>
        <taxon>Euarchontoglires</taxon>
        <taxon>Glires</taxon>
        <taxon>Rodentia</taxon>
        <taxon>Myomorpha</taxon>
        <taxon>Muroidea</taxon>
        <taxon>Muridae</taxon>
        <taxon>Murinae</taxon>
        <taxon>Mus</taxon>
        <taxon>Mus</taxon>
    </lineage>
</organism>
<proteinExistence type="evidence at protein level"/>
<protein>
    <recommendedName>
        <fullName evidence="10">Ly-6/neurotoxin-like protein 1</fullName>
    </recommendedName>
    <alternativeName>
        <fullName evidence="9">GC26</fullName>
    </alternativeName>
</protein>
<evidence type="ECO:0000250" key="1">
    <source>
        <dbReference type="UniProtKB" id="P0DP58"/>
    </source>
</evidence>
<evidence type="ECO:0000255" key="2"/>
<evidence type="ECO:0000269" key="3">
    <source>
    </source>
</evidence>
<evidence type="ECO:0000269" key="4">
    <source>
    </source>
</evidence>
<evidence type="ECO:0000269" key="5">
    <source>
    </source>
</evidence>
<evidence type="ECO:0000269" key="6">
    <source>
    </source>
</evidence>
<evidence type="ECO:0000269" key="7">
    <source>
    </source>
</evidence>
<evidence type="ECO:0000269" key="8">
    <source>
    </source>
</evidence>
<evidence type="ECO:0000303" key="9">
    <source>
    </source>
</evidence>
<evidence type="ECO:0000305" key="10"/>
<evidence type="ECO:0000312" key="11">
    <source>
        <dbReference type="MGI" id="MGI:1345180"/>
    </source>
</evidence>
<name>LYNX1_MOUSE</name>
<comment type="function">
    <text evidence="1 3 4 7 8">Acts in different tissues through interaction to nicotinic acetylcholine receptors (nAChRs) (PubMed:10402197). The proposed role as modulator of nAChR activity seems to be dependent on the nAChR subtype and stoichiometry, and to involve an effect on nAChR trafficking and its cell surface expression, and on single channel properties of the nAChR inserted in the plasma membrane. Modulates functional properties of nicotinic acetylcholine receptors (nAChRs) to prevent excessive excitation, and hence neurodegeneration. Enhances desensitization by increasing both the rate and extent of desensitization of alpha-4:beta-2-containing nAChRs and slowing recovery from desensitization. Promotes large amplitude ACh-evoked currents through alpha-4:beta-2 nAChRs (PubMed:10402197, PubMed:11906696). Is involved in regulation of the nAChR pentameric assembly in the endoplasmic reticulum. Shifts stoichiometry from high sensitivity alpha-4(2):beta-2(3) to low sensitivity alpha-4(3):beta-2(2) nAChR (PubMed:25193667). In vitro modulates alpha-3:beta-4-containing nAChRs. Reduces cell surface expression of (alpha-3:beta-4)(2):beta-4 and (alpha-3:beta-4)(2):alpha-5 nAChRs suggesting an interaction with nAChR alpha-3(-):(+)beta-4 subunit interfaces and an allosteric mode. Corresponding single channel effects characterized by decreased unitary conductance, altered burst proportions and enhanced desensitization/inactivation seem to depend on nAChR alpha:alpha subunit interfaces and are greater in (alpha-3:beta-2)(2):alpha-3 when compared to (alpha-3:beta-2)(2):alpha-5 nAChRs (By similarity). Prevents plasticity in the primary visual cortex late in life (PubMed:21071629).</text>
</comment>
<comment type="subunit">
    <text evidence="1 4 6">Interacts with nAChRs containing alpha-4:beta-2 (CHRNA4:CHRNB2) and alpha-7 (CHRNA7) subunits (PubMed:11906696). Interacts with CHRNA4 probably in the endoplasmic reticulum prior to nAChR pentameric assembly (PubMed:19468303). Interacts with KCNA2/Potassium voltage-gated channel subfamily A member 2 (By similarity).</text>
</comment>
<comment type="subcellular location">
    <subcellularLocation>
        <location evidence="2">Cell membrane</location>
        <topology evidence="2">Lipid-anchor</topology>
        <topology evidence="2">GPI-anchor</topology>
    </subcellularLocation>
    <subcellularLocation>
        <location evidence="3">Cell projection</location>
        <location evidence="3">Dendrite</location>
    </subcellularLocation>
    <subcellularLocation>
        <location evidence="8">Endoplasmic reticulum</location>
    </subcellularLocation>
    <text evidence="3">Detected in Purkinje cells soma and proximal dendrites.</text>
</comment>
<comment type="tissue specificity">
    <text evidence="3 4 7">Expressed in neurons of multiple regions in the CNS, including the cerebral cortex, thalamus, substantia nigra, cerebellum, amygdala and hippocampus (PubMed:10402197, PubMed:11906696). Also expressed in kidney, heart and thymus, but at lower levels than in the brain (PubMed:10402197). Expressed in the primary visual cortex (V1) and the lateral geniculate nucleus (at protein level) (PubMed:21071629).</text>
</comment>
<comment type="developmental stage">
    <text evidence="3 7">Expressed at very low levels at birth and undergoes a marked up-regulation between postnatal days 10 and 20 (PubMed:10402197). Up-regulated in the visual cortex between postnatal day 28 (P28) and P60, when experience-dependent brain plasticity declines (PubMed:21071629).</text>
</comment>
<comment type="disruption phenotype">
    <text evidence="5">Mutant mice show no gross abnormalities in size, viability, CNS morphology or longevity, but demonstrate enhanced performance in learning ability and memory and are more responsive to nicotine. Aging mutant mice exhibit a vacuolating neurodegeneration that is exacerbated by nicotine.</text>
</comment>
<accession>P0DP60</accession>
<accession>Q08EF7</accession>
<accession>Q3TRB5</accession>
<accession>Q9WVC2</accession>
<keyword id="KW-1003">Cell membrane</keyword>
<keyword id="KW-0966">Cell projection</keyword>
<keyword id="KW-1015">Disulfide bond</keyword>
<keyword id="KW-0256">Endoplasmic reticulum</keyword>
<keyword id="KW-0325">Glycoprotein</keyword>
<keyword id="KW-0336">GPI-anchor</keyword>
<keyword id="KW-0449">Lipoprotein</keyword>
<keyword id="KW-0472">Membrane</keyword>
<keyword id="KW-1185">Reference proteome</keyword>
<keyword id="KW-0732">Signal</keyword>
<dbReference type="EMBL" id="AF141377">
    <property type="protein sequence ID" value="AAD38939.1"/>
    <property type="molecule type" value="mRNA"/>
</dbReference>
<dbReference type="EMBL" id="AF169202">
    <property type="protein sequence ID" value="AAF16899.1"/>
    <property type="molecule type" value="Genomic_DNA"/>
</dbReference>
<dbReference type="EMBL" id="AK013827">
    <property type="protein sequence ID" value="BAB29006.1"/>
    <property type="molecule type" value="mRNA"/>
</dbReference>
<dbReference type="EMBL" id="AK161907">
    <property type="protein sequence ID" value="BAE36629.1"/>
    <property type="molecule type" value="mRNA"/>
</dbReference>
<dbReference type="EMBL" id="AK165295">
    <property type="protein sequence ID" value="BAE38124.1"/>
    <property type="molecule type" value="mRNA"/>
</dbReference>
<dbReference type="EMBL" id="AK165314">
    <property type="protein sequence ID" value="BAE38132.1"/>
    <property type="molecule type" value="mRNA"/>
</dbReference>
<dbReference type="EMBL" id="AC118022">
    <property type="status" value="NOT_ANNOTATED_CDS"/>
    <property type="molecule type" value="Genomic_DNA"/>
</dbReference>
<dbReference type="EMBL" id="BC037541">
    <property type="protein sequence ID" value="AAH37541.1"/>
    <property type="molecule type" value="mRNA"/>
</dbReference>
<dbReference type="CCDS" id="CCDS27530.1"/>
<dbReference type="RefSeq" id="NP_035968.1">
    <property type="nucleotide sequence ID" value="NM_011838.4"/>
</dbReference>
<dbReference type="SMR" id="P0DP60"/>
<dbReference type="FunCoup" id="P0DP60">
    <property type="interactions" value="994"/>
</dbReference>
<dbReference type="STRING" id="10090.ENSMUSP00000023259"/>
<dbReference type="PhosphoSitePlus" id="P0DP60"/>
<dbReference type="PaxDb" id="10090-ENSMUSP00000023259"/>
<dbReference type="ProteomicsDB" id="292132"/>
<dbReference type="Antibodypedia" id="21624">
    <property type="antibodies" value="29 antibodies from 13 providers"/>
</dbReference>
<dbReference type="DNASU" id="23936"/>
<dbReference type="Ensembl" id="ENSMUST00000023259.15">
    <property type="protein sequence ID" value="ENSMUSP00000023259.9"/>
    <property type="gene ID" value="ENSMUSG00000022594.15"/>
</dbReference>
<dbReference type="GeneID" id="23936"/>
<dbReference type="KEGG" id="mmu:23936"/>
<dbReference type="AGR" id="MGI:1345180"/>
<dbReference type="CTD" id="66004"/>
<dbReference type="MGI" id="MGI:1345180">
    <property type="gene designation" value="Lynx1"/>
</dbReference>
<dbReference type="VEuPathDB" id="HostDB:ENSMUSG00000022594"/>
<dbReference type="eggNOG" id="ENOG502SD2S">
    <property type="taxonomic scope" value="Eukaryota"/>
</dbReference>
<dbReference type="GeneTree" id="ENSGT00730000111571"/>
<dbReference type="InParanoid" id="P0DP60"/>
<dbReference type="OMA" id="YTPYRMK"/>
<dbReference type="OrthoDB" id="9836900at2759"/>
<dbReference type="CD-CODE" id="CE726F99">
    <property type="entry name" value="Postsynaptic density"/>
</dbReference>
<dbReference type="ChiTaRS" id="Lynx1">
    <property type="organism name" value="mouse"/>
</dbReference>
<dbReference type="PRO" id="PR:P0DP60"/>
<dbReference type="Proteomes" id="UP000000589">
    <property type="component" value="Chromosome 15"/>
</dbReference>
<dbReference type="RNAct" id="P0DP60">
    <property type="molecule type" value="protein"/>
</dbReference>
<dbReference type="Bgee" id="ENSMUSG00000022594">
    <property type="expression patterns" value="Expressed in interventricular septum and 181 other cell types or tissues"/>
</dbReference>
<dbReference type="ExpressionAtlas" id="P0DP60">
    <property type="expression patterns" value="baseline and differential"/>
</dbReference>
<dbReference type="GO" id="GO:0030425">
    <property type="term" value="C:dendrite"/>
    <property type="evidence" value="ECO:0007669"/>
    <property type="project" value="UniProtKB-SubCell"/>
</dbReference>
<dbReference type="GO" id="GO:0005783">
    <property type="term" value="C:endoplasmic reticulum"/>
    <property type="evidence" value="ECO:0007669"/>
    <property type="project" value="UniProtKB-SubCell"/>
</dbReference>
<dbReference type="GO" id="GO:0016020">
    <property type="term" value="C:membrane"/>
    <property type="evidence" value="ECO:0000314"/>
    <property type="project" value="MGI"/>
</dbReference>
<dbReference type="GO" id="GO:0005886">
    <property type="term" value="C:plasma membrane"/>
    <property type="evidence" value="ECO:0000314"/>
    <property type="project" value="MGI"/>
</dbReference>
<dbReference type="GO" id="GO:0098552">
    <property type="term" value="C:side of membrane"/>
    <property type="evidence" value="ECO:0007669"/>
    <property type="project" value="UniProtKB-KW"/>
</dbReference>
<dbReference type="GO" id="GO:0045202">
    <property type="term" value="C:synapse"/>
    <property type="evidence" value="ECO:0007669"/>
    <property type="project" value="GOC"/>
</dbReference>
<dbReference type="GO" id="GO:0033130">
    <property type="term" value="F:acetylcholine receptor binding"/>
    <property type="evidence" value="ECO:0000250"/>
    <property type="project" value="UniProtKB"/>
</dbReference>
<dbReference type="GO" id="GO:0030550">
    <property type="term" value="F:acetylcholine receptor inhibitor activity"/>
    <property type="evidence" value="ECO:0000314"/>
    <property type="project" value="MGI"/>
</dbReference>
<dbReference type="GO" id="GO:0030548">
    <property type="term" value="F:acetylcholine receptor regulator activity"/>
    <property type="evidence" value="ECO:0000250"/>
    <property type="project" value="UniProtKB"/>
</dbReference>
<dbReference type="GO" id="GO:0008200">
    <property type="term" value="F:ion channel inhibitor activity"/>
    <property type="evidence" value="ECO:0000314"/>
    <property type="project" value="MGI"/>
</dbReference>
<dbReference type="GO" id="GO:0099601">
    <property type="term" value="P:regulation of neurotransmitter receptor activity"/>
    <property type="evidence" value="ECO:0000250"/>
    <property type="project" value="UniProtKB"/>
</dbReference>
<dbReference type="GO" id="GO:0007271">
    <property type="term" value="P:synaptic transmission, cholinergic"/>
    <property type="evidence" value="ECO:0000314"/>
    <property type="project" value="MGI"/>
</dbReference>
<dbReference type="CDD" id="cd23585">
    <property type="entry name" value="TFP_LU_ECD_LYNX1"/>
    <property type="match status" value="1"/>
</dbReference>
<dbReference type="FunFam" id="2.10.60.10:FF:000003">
    <property type="entry name" value="lymphocyte antigen 6E isoform X1"/>
    <property type="match status" value="1"/>
</dbReference>
<dbReference type="Gene3D" id="2.10.60.10">
    <property type="entry name" value="CD59"/>
    <property type="match status" value="1"/>
</dbReference>
<dbReference type="InterPro" id="IPR051110">
    <property type="entry name" value="Ly-6/neurotoxin-like_GPI-ap"/>
</dbReference>
<dbReference type="InterPro" id="IPR016054">
    <property type="entry name" value="LY6_UPA_recep-like"/>
</dbReference>
<dbReference type="InterPro" id="IPR045860">
    <property type="entry name" value="Snake_toxin-like_sf"/>
</dbReference>
<dbReference type="InterPro" id="IPR035076">
    <property type="entry name" value="Toxin/TOLIP"/>
</dbReference>
<dbReference type="PANTHER" id="PTHR16983:SF27">
    <property type="entry name" value="LY-6_NEUROTOXIN-LIKE PROTEIN 1"/>
    <property type="match status" value="1"/>
</dbReference>
<dbReference type="PANTHER" id="PTHR16983">
    <property type="entry name" value="UPAR/LY6 DOMAIN-CONTAINING PROTEIN"/>
    <property type="match status" value="1"/>
</dbReference>
<dbReference type="Pfam" id="PF00087">
    <property type="entry name" value="Toxin_TOLIP"/>
    <property type="match status" value="1"/>
</dbReference>
<dbReference type="SMART" id="SM00134">
    <property type="entry name" value="LU"/>
    <property type="match status" value="1"/>
</dbReference>
<dbReference type="SUPFAM" id="SSF57302">
    <property type="entry name" value="Snake toxin-like"/>
    <property type="match status" value="1"/>
</dbReference>
<reference key="1">
    <citation type="journal article" date="1999" name="Neuron">
        <title>Lynx1, an endogenous toxin-like modulator of nicotinic acetylcholine receptors in the mammalian CNS.</title>
        <authorList>
            <person name="Miwa J.M."/>
            <person name="Ibanez-Tallon I."/>
            <person name="Crabtree G.W."/>
            <person name="Sanchez R."/>
            <person name="Sali A."/>
            <person name="Role L.W."/>
            <person name="Heintz N."/>
        </authorList>
    </citation>
    <scope>NUCLEOTIDE SEQUENCE [MRNA]</scope>
    <scope>FUNCTION</scope>
    <scope>TISSUE SPECIFICITY</scope>
    <scope>DEVELOPMENTAL STAGE</scope>
    <source>
        <strain>C57BL/6J</strain>
        <tissue>Cerebellum</tissue>
    </source>
</reference>
<reference key="2">
    <citation type="submission" date="1999-07" db="EMBL/GenBank/DDBJ databases">
        <title>Genetic mapping and characterization of Lynx1: a new member of the Ly6/neurotoxin superfamily.</title>
        <authorList>
            <person name="Miwa J.M."/>
            <person name="Fletcher C.F."/>
            <person name="Copeland N.G."/>
            <person name="Jenkins N.A."/>
            <person name="Heintz N."/>
        </authorList>
    </citation>
    <scope>NUCLEOTIDE SEQUENCE [GENOMIC DNA]</scope>
    <source>
        <strain>129</strain>
    </source>
</reference>
<reference key="3">
    <citation type="journal article" date="2005" name="Science">
        <title>The transcriptional landscape of the mammalian genome.</title>
        <authorList>
            <person name="Carninci P."/>
            <person name="Kasukawa T."/>
            <person name="Katayama S."/>
            <person name="Gough J."/>
            <person name="Frith M.C."/>
            <person name="Maeda N."/>
            <person name="Oyama R."/>
            <person name="Ravasi T."/>
            <person name="Lenhard B."/>
            <person name="Wells C."/>
            <person name="Kodzius R."/>
            <person name="Shimokawa K."/>
            <person name="Bajic V.B."/>
            <person name="Brenner S.E."/>
            <person name="Batalov S."/>
            <person name="Forrest A.R."/>
            <person name="Zavolan M."/>
            <person name="Davis M.J."/>
            <person name="Wilming L.G."/>
            <person name="Aidinis V."/>
            <person name="Allen J.E."/>
            <person name="Ambesi-Impiombato A."/>
            <person name="Apweiler R."/>
            <person name="Aturaliya R.N."/>
            <person name="Bailey T.L."/>
            <person name="Bansal M."/>
            <person name="Baxter L."/>
            <person name="Beisel K.W."/>
            <person name="Bersano T."/>
            <person name="Bono H."/>
            <person name="Chalk A.M."/>
            <person name="Chiu K.P."/>
            <person name="Choudhary V."/>
            <person name="Christoffels A."/>
            <person name="Clutterbuck D.R."/>
            <person name="Crowe M.L."/>
            <person name="Dalla E."/>
            <person name="Dalrymple B.P."/>
            <person name="de Bono B."/>
            <person name="Della Gatta G."/>
            <person name="di Bernardo D."/>
            <person name="Down T."/>
            <person name="Engstrom P."/>
            <person name="Fagiolini M."/>
            <person name="Faulkner G."/>
            <person name="Fletcher C.F."/>
            <person name="Fukushima T."/>
            <person name="Furuno M."/>
            <person name="Futaki S."/>
            <person name="Gariboldi M."/>
            <person name="Georgii-Hemming P."/>
            <person name="Gingeras T.R."/>
            <person name="Gojobori T."/>
            <person name="Green R.E."/>
            <person name="Gustincich S."/>
            <person name="Harbers M."/>
            <person name="Hayashi Y."/>
            <person name="Hensch T.K."/>
            <person name="Hirokawa N."/>
            <person name="Hill D."/>
            <person name="Huminiecki L."/>
            <person name="Iacono M."/>
            <person name="Ikeo K."/>
            <person name="Iwama A."/>
            <person name="Ishikawa T."/>
            <person name="Jakt M."/>
            <person name="Kanapin A."/>
            <person name="Katoh M."/>
            <person name="Kawasawa Y."/>
            <person name="Kelso J."/>
            <person name="Kitamura H."/>
            <person name="Kitano H."/>
            <person name="Kollias G."/>
            <person name="Krishnan S.P."/>
            <person name="Kruger A."/>
            <person name="Kummerfeld S.K."/>
            <person name="Kurochkin I.V."/>
            <person name="Lareau L.F."/>
            <person name="Lazarevic D."/>
            <person name="Lipovich L."/>
            <person name="Liu J."/>
            <person name="Liuni S."/>
            <person name="McWilliam S."/>
            <person name="Madan Babu M."/>
            <person name="Madera M."/>
            <person name="Marchionni L."/>
            <person name="Matsuda H."/>
            <person name="Matsuzawa S."/>
            <person name="Miki H."/>
            <person name="Mignone F."/>
            <person name="Miyake S."/>
            <person name="Morris K."/>
            <person name="Mottagui-Tabar S."/>
            <person name="Mulder N."/>
            <person name="Nakano N."/>
            <person name="Nakauchi H."/>
            <person name="Ng P."/>
            <person name="Nilsson R."/>
            <person name="Nishiguchi S."/>
            <person name="Nishikawa S."/>
            <person name="Nori F."/>
            <person name="Ohara O."/>
            <person name="Okazaki Y."/>
            <person name="Orlando V."/>
            <person name="Pang K.C."/>
            <person name="Pavan W.J."/>
            <person name="Pavesi G."/>
            <person name="Pesole G."/>
            <person name="Petrovsky N."/>
            <person name="Piazza S."/>
            <person name="Reed J."/>
            <person name="Reid J.F."/>
            <person name="Ring B.Z."/>
            <person name="Ringwald M."/>
            <person name="Rost B."/>
            <person name="Ruan Y."/>
            <person name="Salzberg S.L."/>
            <person name="Sandelin A."/>
            <person name="Schneider C."/>
            <person name="Schoenbach C."/>
            <person name="Sekiguchi K."/>
            <person name="Semple C.A."/>
            <person name="Seno S."/>
            <person name="Sessa L."/>
            <person name="Sheng Y."/>
            <person name="Shibata Y."/>
            <person name="Shimada H."/>
            <person name="Shimada K."/>
            <person name="Silva D."/>
            <person name="Sinclair B."/>
            <person name="Sperling S."/>
            <person name="Stupka E."/>
            <person name="Sugiura K."/>
            <person name="Sultana R."/>
            <person name="Takenaka Y."/>
            <person name="Taki K."/>
            <person name="Tammoja K."/>
            <person name="Tan S.L."/>
            <person name="Tang S."/>
            <person name="Taylor M.S."/>
            <person name="Tegner J."/>
            <person name="Teichmann S.A."/>
            <person name="Ueda H.R."/>
            <person name="van Nimwegen E."/>
            <person name="Verardo R."/>
            <person name="Wei C.L."/>
            <person name="Yagi K."/>
            <person name="Yamanishi H."/>
            <person name="Zabarovsky E."/>
            <person name="Zhu S."/>
            <person name="Zimmer A."/>
            <person name="Hide W."/>
            <person name="Bult C."/>
            <person name="Grimmond S.M."/>
            <person name="Teasdale R.D."/>
            <person name="Liu E.T."/>
            <person name="Brusic V."/>
            <person name="Quackenbush J."/>
            <person name="Wahlestedt C."/>
            <person name="Mattick J.S."/>
            <person name="Hume D.A."/>
            <person name="Kai C."/>
            <person name="Sasaki D."/>
            <person name="Tomaru Y."/>
            <person name="Fukuda S."/>
            <person name="Kanamori-Katayama M."/>
            <person name="Suzuki M."/>
            <person name="Aoki J."/>
            <person name="Arakawa T."/>
            <person name="Iida J."/>
            <person name="Imamura K."/>
            <person name="Itoh M."/>
            <person name="Kato T."/>
            <person name="Kawaji H."/>
            <person name="Kawagashira N."/>
            <person name="Kawashima T."/>
            <person name="Kojima M."/>
            <person name="Kondo S."/>
            <person name="Konno H."/>
            <person name="Nakano K."/>
            <person name="Ninomiya N."/>
            <person name="Nishio T."/>
            <person name="Okada M."/>
            <person name="Plessy C."/>
            <person name="Shibata K."/>
            <person name="Shiraki T."/>
            <person name="Suzuki S."/>
            <person name="Tagami M."/>
            <person name="Waki K."/>
            <person name="Watahiki A."/>
            <person name="Okamura-Oho Y."/>
            <person name="Suzuki H."/>
            <person name="Kawai J."/>
            <person name="Hayashizaki Y."/>
        </authorList>
    </citation>
    <scope>NUCLEOTIDE SEQUENCE [LARGE SCALE MRNA]</scope>
    <source>
        <strain>C57BL/6J</strain>
        <tissue>Hippocampus</tissue>
        <tissue>Medulla oblongata</tissue>
        <tissue>Spinal cord</tissue>
        <tissue>Spleen</tissue>
    </source>
</reference>
<reference key="4">
    <citation type="journal article" date="2009" name="PLoS Biol.">
        <title>Lineage-specific biology revealed by a finished genome assembly of the mouse.</title>
        <authorList>
            <person name="Church D.M."/>
            <person name="Goodstadt L."/>
            <person name="Hillier L.W."/>
            <person name="Zody M.C."/>
            <person name="Goldstein S."/>
            <person name="She X."/>
            <person name="Bult C.J."/>
            <person name="Agarwala R."/>
            <person name="Cherry J.L."/>
            <person name="DiCuccio M."/>
            <person name="Hlavina W."/>
            <person name="Kapustin Y."/>
            <person name="Meric P."/>
            <person name="Maglott D."/>
            <person name="Birtle Z."/>
            <person name="Marques A.C."/>
            <person name="Graves T."/>
            <person name="Zhou S."/>
            <person name="Teague B."/>
            <person name="Potamousis K."/>
            <person name="Churas C."/>
            <person name="Place M."/>
            <person name="Herschleb J."/>
            <person name="Runnheim R."/>
            <person name="Forrest D."/>
            <person name="Amos-Landgraf J."/>
            <person name="Schwartz D.C."/>
            <person name="Cheng Z."/>
            <person name="Lindblad-Toh K."/>
            <person name="Eichler E.E."/>
            <person name="Ponting C.P."/>
        </authorList>
    </citation>
    <scope>NUCLEOTIDE SEQUENCE [LARGE SCALE GENOMIC DNA]</scope>
    <source>
        <strain>C57BL/6J</strain>
    </source>
</reference>
<reference key="5">
    <citation type="journal article" date="2004" name="Genome Res.">
        <title>The status, quality, and expansion of the NIH full-length cDNA project: the Mammalian Gene Collection (MGC).</title>
        <authorList>
            <consortium name="The MGC Project Team"/>
        </authorList>
    </citation>
    <scope>NUCLEOTIDE SEQUENCE [LARGE SCALE MRNA]</scope>
    <source>
        <strain>FVB/N</strain>
    </source>
</reference>
<reference key="6">
    <citation type="journal article" date="2002" name="Neuron">
        <title>Novel modulation of neuronal nicotinic acetylcholine receptors by association with the endogenous prototoxin lynx1.</title>
        <authorList>
            <person name="Ibanez-Tallon I."/>
            <person name="Miwa J.M."/>
            <person name="Wang H.L."/>
            <person name="Adams N.C."/>
            <person name="Crabtree G.W."/>
            <person name="Sine S.M."/>
            <person name="Heintz N."/>
        </authorList>
    </citation>
    <scope>FUNCTION</scope>
    <scope>TISSUE SPECIFICITY</scope>
    <scope>INTERACTION WITH CHRNA7 AND CHRNA4</scope>
</reference>
<reference key="7">
    <citation type="journal article" date="2006" name="Neuron">
        <title>The prototoxin lynx1 acts on nicotinic acetylcholine receptors to balance neuronal activity and survival in vivo.</title>
        <authorList>
            <person name="Miwa J.M."/>
            <person name="Stevens T.R."/>
            <person name="King S.L."/>
            <person name="Caldarone B.J."/>
            <person name="Ibanez-Tallon I."/>
            <person name="Xiao C."/>
            <person name="Fitzsimonds R.M."/>
            <person name="Pavlides C."/>
            <person name="Lester H.A."/>
            <person name="Picciotto M.R."/>
            <person name="Heintz N."/>
        </authorList>
    </citation>
    <scope>DISRUPTION PHENOTYPE</scope>
</reference>
<reference key="8">
    <citation type="journal article" date="2010" name="Cell">
        <title>A tissue-specific atlas of mouse protein phosphorylation and expression.</title>
        <authorList>
            <person name="Huttlin E.L."/>
            <person name="Jedrychowski M.P."/>
            <person name="Elias J.E."/>
            <person name="Goswami T."/>
            <person name="Rad R."/>
            <person name="Beausoleil S.A."/>
            <person name="Villen J."/>
            <person name="Haas W."/>
            <person name="Sowa M.E."/>
            <person name="Gygi S.P."/>
        </authorList>
    </citation>
    <scope>IDENTIFICATION BY MASS SPECTROMETRY [LARGE SCALE ANALYSIS]</scope>
    <source>
        <tissue>Brain</tissue>
    </source>
</reference>
<reference key="9">
    <citation type="journal article" date="2010" name="Science">
        <title>Lynx1, a cholinergic brake, limits plasticity in adult visual cortex.</title>
        <authorList>
            <person name="Morishita H."/>
            <person name="Miwa J.M."/>
            <person name="Heintz N."/>
            <person name="Hensch T.K."/>
        </authorList>
    </citation>
    <scope>FUNCTION</scope>
    <scope>TISSUE SPECIFICITY</scope>
    <scope>DEVELOPMENTAL STAGE</scope>
</reference>
<reference key="10">
    <citation type="journal article" date="2014" name="J. Biol. Chem.">
        <title>Lynx1 shifts alpha4beta2 nicotinic receptor subunit stoichiometry by affecting assembly in the endoplasmic reticulum.</title>
        <authorList>
            <person name="Nichols W.A."/>
            <person name="Henderson B.J."/>
            <person name="Yu C."/>
            <person name="Parker R.L."/>
            <person name="Richards C.I."/>
            <person name="Lester H.A."/>
            <person name="Miwa J.M."/>
        </authorList>
    </citation>
    <scope>FUNCTION</scope>
    <scope>SUBCELLULAR LOCATION</scope>
    <scope>INTERACTION WITH CHRNA4</scope>
</reference>
<gene>
    <name evidence="11" type="primary">Lynx1</name>
</gene>
<feature type="signal peptide" evidence="2">
    <location>
        <begin position="1"/>
        <end position="20"/>
    </location>
</feature>
<feature type="chain" id="PRO_0000036158" description="Ly-6/neurotoxin-like protein 1" evidence="2">
    <location>
        <begin position="21"/>
        <end position="92"/>
    </location>
</feature>
<feature type="propeptide" id="PRO_0000440643" description="Removed in mature form" evidence="2">
    <location>
        <begin position="93"/>
        <end position="116"/>
    </location>
</feature>
<feature type="domain" description="UPAR/Ly6" evidence="2">
    <location>
        <begin position="21"/>
        <end position="104"/>
    </location>
</feature>
<feature type="lipid moiety-binding region" description="GPI-anchor amidated asparagine" evidence="2">
    <location>
        <position position="92"/>
    </location>
</feature>
<feature type="disulfide bond" evidence="1">
    <location>
        <begin position="23"/>
        <end position="46"/>
    </location>
</feature>
<feature type="disulfide bond" evidence="1">
    <location>
        <begin position="26"/>
        <end position="33"/>
    </location>
</feature>
<feature type="disulfide bond" evidence="1">
    <location>
        <begin position="39"/>
        <end position="64"/>
    </location>
</feature>
<feature type="disulfide bond" evidence="1">
    <location>
        <begin position="68"/>
        <end position="85"/>
    </location>
</feature>
<feature type="disulfide bond" evidence="1">
    <location>
        <begin position="86"/>
        <end position="91"/>
    </location>
</feature>
<sequence length="116" mass="12835">MTHLLTVFLVALMGLPVAQALECHVCAYNGDNCFKPMRCPAMATYCMTTRTYFTPYRMKVRKSCVPSCFETVYDGYSKHASATSCCQYYLCNGAGFATPVTLALVPALLATFWSLL</sequence>